<proteinExistence type="inferred from homology"/>
<comment type="function">
    <text evidence="1">Endonuclease that is involved in the suppression of homologous recombination and thus may have a key role in the control of bacterial genetic diversity.</text>
</comment>
<comment type="function">
    <text evidence="1">Acts as a ribosome collision sensor, splitting the ribosome into its 2 subunits. Detects stalled/collided 70S ribosomes which it binds and splits by an ATP-hydrolysis driven conformational change. Acts upstream of the ribosome quality control system (RQC), a ribosome-associated complex that mediates the extraction of incompletely synthesized nascent chains from stalled ribosomes and their subsequent degradation. Probably generates substrates for RQC.</text>
</comment>
<comment type="subunit">
    <text evidence="1">Homodimer. Binds to stalled ribosomes, contacting rRNA.</text>
</comment>
<comment type="similarity">
    <text evidence="1">Belongs to the DNA mismatch repair MutS family. MutS2 subfamily.</text>
</comment>
<name>MUTS2_ANADF</name>
<sequence length="805" mass="84747">MTDRTQRELGWPEILNALAARCRLPAGRNRALALPFQPTAEAAREALALVGEARRLSELALALPLGGVGDVEGHLERASKGGVLEPLALRECAALARAAARTRGLLEARASETPRLWALAEPLSPSAALADRIERAIEPSGAISDRASAELAQARERSRGLHRALKAQVETLLADADMQRHLRDTYFTIRNERYVLPVLASARRAVPGIVHNASQSGQTLFVEPDSMVELGNELSIANAVAAEEEQRILRELTGALMADSGALARDLGILAALDVLEGSALLASDLDAHAPEVLSPFDGLRVGGAGAGFELLSLRHPLLVLQGKKVVPSHVRLDAPARALIVSGPNGGGKTVAITAVGLSALMLRAGLPVAAAEGSRLPFFLEVKAAVDERGDLAKDLSTFTAHLAAVKEMLAGAVPGSLILVDEIAADTDPREGAALAAAILESLVERGAAVLVTTHLDELKALALTDPRYANARVGFDAERLAPTYQLHLGSPGSSSAIEVAARVGLPAPLVERARAALTGHGGALGQALRALDDERARLAEERRAAESARDAARKAEERARAAEEVARRAQREAAARMGEALADELEAARAEVAELLAGLQARPTVKAATDAARQLDAWRATVAQAAKATQARADAGAEALPGGEVRPGVRVRIVSLGQEGEVVEVDGKDALVRAGPLKVRRPVADLVPLLGKAKDAAKLGRSRSEKLQAASEARPSAPPGLERRLDVRGLRVEELLREVERFLDRLYSDGEADCLILHGHGTGALKQALRDHLSASPYVGAFRAGDRHEGGDAVTVVSLRR</sequence>
<gene>
    <name evidence="1" type="primary">mutS2</name>
    <name evidence="1" type="synonym">rqcU</name>
    <name type="ordered locus">Anae109_1457</name>
</gene>
<feature type="chain" id="PRO_1000093340" description="Endonuclease MutS2">
    <location>
        <begin position="1"/>
        <end position="805"/>
    </location>
</feature>
<feature type="domain" description="Smr" evidence="1">
    <location>
        <begin position="729"/>
        <end position="804"/>
    </location>
</feature>
<feature type="region of interest" description="Disordered" evidence="2">
    <location>
        <begin position="705"/>
        <end position="724"/>
    </location>
</feature>
<feature type="binding site" evidence="1">
    <location>
        <begin position="344"/>
        <end position="351"/>
    </location>
    <ligand>
        <name>ATP</name>
        <dbReference type="ChEBI" id="CHEBI:30616"/>
    </ligand>
</feature>
<keyword id="KW-0067">ATP-binding</keyword>
<keyword id="KW-0238">DNA-binding</keyword>
<keyword id="KW-0255">Endonuclease</keyword>
<keyword id="KW-0378">Hydrolase</keyword>
<keyword id="KW-0540">Nuclease</keyword>
<keyword id="KW-0547">Nucleotide-binding</keyword>
<keyword id="KW-1185">Reference proteome</keyword>
<keyword id="KW-0694">RNA-binding</keyword>
<keyword id="KW-0699">rRNA-binding</keyword>
<organism>
    <name type="scientific">Anaeromyxobacter sp. (strain Fw109-5)</name>
    <dbReference type="NCBI Taxonomy" id="404589"/>
    <lineage>
        <taxon>Bacteria</taxon>
        <taxon>Pseudomonadati</taxon>
        <taxon>Myxococcota</taxon>
        <taxon>Myxococcia</taxon>
        <taxon>Myxococcales</taxon>
        <taxon>Cystobacterineae</taxon>
        <taxon>Anaeromyxobacteraceae</taxon>
        <taxon>Anaeromyxobacter</taxon>
    </lineage>
</organism>
<protein>
    <recommendedName>
        <fullName evidence="1">Endonuclease MutS2</fullName>
        <ecNumber evidence="1">3.1.-.-</ecNumber>
    </recommendedName>
    <alternativeName>
        <fullName evidence="1">Ribosome-associated protein quality control-upstream factor</fullName>
        <shortName evidence="1">RQC-upstream factor</shortName>
        <shortName evidence="1">RqcU</shortName>
        <ecNumber evidence="1">3.6.4.-</ecNumber>
    </alternativeName>
</protein>
<accession>A7HAB8</accession>
<reference key="1">
    <citation type="journal article" date="2015" name="Genome Announc.">
        <title>Complete genome sequence of Anaeromyxobacter sp. Fw109-5, an anaerobic, metal-reducing bacterium isolated from a contaminated subsurface environment.</title>
        <authorList>
            <person name="Hwang C."/>
            <person name="Copeland A."/>
            <person name="Lucas S."/>
            <person name="Lapidus A."/>
            <person name="Barry K."/>
            <person name="Glavina Del Rio T."/>
            <person name="Dalin E."/>
            <person name="Tice H."/>
            <person name="Pitluck S."/>
            <person name="Sims D."/>
            <person name="Brettin T."/>
            <person name="Bruce D.C."/>
            <person name="Detter J.C."/>
            <person name="Han C.S."/>
            <person name="Schmutz J."/>
            <person name="Larimer F.W."/>
            <person name="Land M.L."/>
            <person name="Hauser L.J."/>
            <person name="Kyrpides N."/>
            <person name="Lykidis A."/>
            <person name="Richardson P."/>
            <person name="Belieav A."/>
            <person name="Sanford R.A."/>
            <person name="Loeffler F.E."/>
            <person name="Fields M.W."/>
        </authorList>
    </citation>
    <scope>NUCLEOTIDE SEQUENCE [LARGE SCALE GENOMIC DNA]</scope>
    <source>
        <strain>Fw109-5</strain>
    </source>
</reference>
<dbReference type="EC" id="3.1.-.-" evidence="1"/>
<dbReference type="EC" id="3.6.4.-" evidence="1"/>
<dbReference type="EMBL" id="CP000769">
    <property type="protein sequence ID" value="ABS25664.1"/>
    <property type="molecule type" value="Genomic_DNA"/>
</dbReference>
<dbReference type="RefSeq" id="WP_011985770.1">
    <property type="nucleotide sequence ID" value="NC_009675.1"/>
</dbReference>
<dbReference type="SMR" id="A7HAB8"/>
<dbReference type="STRING" id="404589.Anae109_1457"/>
<dbReference type="KEGG" id="afw:Anae109_1457"/>
<dbReference type="eggNOG" id="COG1193">
    <property type="taxonomic scope" value="Bacteria"/>
</dbReference>
<dbReference type="HOGENOM" id="CLU_011252_2_0_7"/>
<dbReference type="OrthoDB" id="9808166at2"/>
<dbReference type="Proteomes" id="UP000006382">
    <property type="component" value="Chromosome"/>
</dbReference>
<dbReference type="GO" id="GO:0005524">
    <property type="term" value="F:ATP binding"/>
    <property type="evidence" value="ECO:0007669"/>
    <property type="project" value="UniProtKB-UniRule"/>
</dbReference>
<dbReference type="GO" id="GO:0016887">
    <property type="term" value="F:ATP hydrolysis activity"/>
    <property type="evidence" value="ECO:0007669"/>
    <property type="project" value="InterPro"/>
</dbReference>
<dbReference type="GO" id="GO:0140664">
    <property type="term" value="F:ATP-dependent DNA damage sensor activity"/>
    <property type="evidence" value="ECO:0007669"/>
    <property type="project" value="InterPro"/>
</dbReference>
<dbReference type="GO" id="GO:0004519">
    <property type="term" value="F:endonuclease activity"/>
    <property type="evidence" value="ECO:0007669"/>
    <property type="project" value="UniProtKB-UniRule"/>
</dbReference>
<dbReference type="GO" id="GO:0030983">
    <property type="term" value="F:mismatched DNA binding"/>
    <property type="evidence" value="ECO:0007669"/>
    <property type="project" value="InterPro"/>
</dbReference>
<dbReference type="GO" id="GO:0043023">
    <property type="term" value="F:ribosomal large subunit binding"/>
    <property type="evidence" value="ECO:0007669"/>
    <property type="project" value="UniProtKB-UniRule"/>
</dbReference>
<dbReference type="GO" id="GO:0019843">
    <property type="term" value="F:rRNA binding"/>
    <property type="evidence" value="ECO:0007669"/>
    <property type="project" value="UniProtKB-UniRule"/>
</dbReference>
<dbReference type="GO" id="GO:0006298">
    <property type="term" value="P:mismatch repair"/>
    <property type="evidence" value="ECO:0007669"/>
    <property type="project" value="InterPro"/>
</dbReference>
<dbReference type="GO" id="GO:0045910">
    <property type="term" value="P:negative regulation of DNA recombination"/>
    <property type="evidence" value="ECO:0007669"/>
    <property type="project" value="InterPro"/>
</dbReference>
<dbReference type="GO" id="GO:0072344">
    <property type="term" value="P:rescue of stalled ribosome"/>
    <property type="evidence" value="ECO:0007669"/>
    <property type="project" value="UniProtKB-UniRule"/>
</dbReference>
<dbReference type="Gene3D" id="3.30.1370.110">
    <property type="match status" value="1"/>
</dbReference>
<dbReference type="Gene3D" id="3.40.50.300">
    <property type="entry name" value="P-loop containing nucleotide triphosphate hydrolases"/>
    <property type="match status" value="1"/>
</dbReference>
<dbReference type="HAMAP" id="MF_00092">
    <property type="entry name" value="MutS2"/>
    <property type="match status" value="1"/>
</dbReference>
<dbReference type="InterPro" id="IPR000432">
    <property type="entry name" value="DNA_mismatch_repair_MutS_C"/>
</dbReference>
<dbReference type="InterPro" id="IPR007696">
    <property type="entry name" value="DNA_mismatch_repair_MutS_core"/>
</dbReference>
<dbReference type="InterPro" id="IPR036187">
    <property type="entry name" value="DNA_mismatch_repair_MutS_sf"/>
</dbReference>
<dbReference type="InterPro" id="IPR046893">
    <property type="entry name" value="MSSS"/>
</dbReference>
<dbReference type="InterPro" id="IPR045076">
    <property type="entry name" value="MutS"/>
</dbReference>
<dbReference type="InterPro" id="IPR005747">
    <property type="entry name" value="MutS2"/>
</dbReference>
<dbReference type="InterPro" id="IPR027417">
    <property type="entry name" value="P-loop_NTPase"/>
</dbReference>
<dbReference type="InterPro" id="IPR002625">
    <property type="entry name" value="Smr_dom"/>
</dbReference>
<dbReference type="InterPro" id="IPR036063">
    <property type="entry name" value="Smr_dom_sf"/>
</dbReference>
<dbReference type="NCBIfam" id="TIGR01069">
    <property type="entry name" value="mutS2"/>
    <property type="match status" value="1"/>
</dbReference>
<dbReference type="PANTHER" id="PTHR48466:SF2">
    <property type="entry name" value="OS10G0509000 PROTEIN"/>
    <property type="match status" value="1"/>
</dbReference>
<dbReference type="PANTHER" id="PTHR48466">
    <property type="entry name" value="OS10G0509000 PROTEIN-RELATED"/>
    <property type="match status" value="1"/>
</dbReference>
<dbReference type="Pfam" id="PF20297">
    <property type="entry name" value="MSSS"/>
    <property type="match status" value="1"/>
</dbReference>
<dbReference type="Pfam" id="PF00488">
    <property type="entry name" value="MutS_V"/>
    <property type="match status" value="1"/>
</dbReference>
<dbReference type="Pfam" id="PF01713">
    <property type="entry name" value="Smr"/>
    <property type="match status" value="1"/>
</dbReference>
<dbReference type="PIRSF" id="PIRSF005814">
    <property type="entry name" value="MutS_YshD"/>
    <property type="match status" value="1"/>
</dbReference>
<dbReference type="SMART" id="SM00534">
    <property type="entry name" value="MUTSac"/>
    <property type="match status" value="1"/>
</dbReference>
<dbReference type="SMART" id="SM00533">
    <property type="entry name" value="MUTSd"/>
    <property type="match status" value="1"/>
</dbReference>
<dbReference type="SMART" id="SM00463">
    <property type="entry name" value="SMR"/>
    <property type="match status" value="1"/>
</dbReference>
<dbReference type="SUPFAM" id="SSF48334">
    <property type="entry name" value="DNA repair protein MutS, domain III"/>
    <property type="match status" value="1"/>
</dbReference>
<dbReference type="SUPFAM" id="SSF52540">
    <property type="entry name" value="P-loop containing nucleoside triphosphate hydrolases"/>
    <property type="match status" value="1"/>
</dbReference>
<dbReference type="SUPFAM" id="SSF160443">
    <property type="entry name" value="SMR domain-like"/>
    <property type="match status" value="1"/>
</dbReference>
<dbReference type="PROSITE" id="PS50828">
    <property type="entry name" value="SMR"/>
    <property type="match status" value="1"/>
</dbReference>
<evidence type="ECO:0000255" key="1">
    <source>
        <dbReference type="HAMAP-Rule" id="MF_00092"/>
    </source>
</evidence>
<evidence type="ECO:0000256" key="2">
    <source>
        <dbReference type="SAM" id="MobiDB-lite"/>
    </source>
</evidence>